<organism>
    <name type="scientific">Pseudomonas fluorescens (strain Pf0-1)</name>
    <dbReference type="NCBI Taxonomy" id="205922"/>
    <lineage>
        <taxon>Bacteria</taxon>
        <taxon>Pseudomonadati</taxon>
        <taxon>Pseudomonadota</taxon>
        <taxon>Gammaproteobacteria</taxon>
        <taxon>Pseudomonadales</taxon>
        <taxon>Pseudomonadaceae</taxon>
        <taxon>Pseudomonas</taxon>
    </lineage>
</organism>
<evidence type="ECO:0000255" key="1">
    <source>
        <dbReference type="HAMAP-Rule" id="MF_01172"/>
    </source>
</evidence>
<sequence length="448" mass="48728">MKSYEVNFDGLVGPTHNYGGLSYGNVASQSNSQQSSNPKEAALQGLAKMKALMEMGFQQGVLAPQERPDVAALRRLGFSGTDAQVIERAAKEAMPLLVASCSASSMWVANAATVSPSADTADGRVHFTAANLNCKYHRSIEHPTTSRVLGAMFANQQHFAHHAALPAVAQFGDEGAANHTRFCREYGDAGVEFFVFGRSAFDTRYPAPQKYPARQTLEASQAVARLHGLRDDGVVYAQQNPAVIDQGVFHNDVIAVGNGEVLFYHEDAFLDTDQMLAELQAKLAKVGGKFQSVCVPRSAVTVDDAVRSYLFNSQLLSRPDGSMLLIVPEECRGNERVWNYLQGLTSSGGLIREVKVFDLKQSMQNGGGPACLRLRVALNETELAAVNPGVIMTAPLYGSLTAWVEKHYRDRLTESDLADPQLLLECRTALDELTQILKLGAVYPFQIN</sequence>
<gene>
    <name evidence="1" type="primary">astB</name>
    <name type="ordered locus">Pfl01_4281</name>
</gene>
<reference key="1">
    <citation type="journal article" date="2009" name="Genome Biol.">
        <title>Genomic and genetic analyses of diversity and plant interactions of Pseudomonas fluorescens.</title>
        <authorList>
            <person name="Silby M.W."/>
            <person name="Cerdeno-Tarraga A.M."/>
            <person name="Vernikos G.S."/>
            <person name="Giddens S.R."/>
            <person name="Jackson R.W."/>
            <person name="Preston G.M."/>
            <person name="Zhang X.-X."/>
            <person name="Moon C.D."/>
            <person name="Gehrig S.M."/>
            <person name="Godfrey S.A.C."/>
            <person name="Knight C.G."/>
            <person name="Malone J.G."/>
            <person name="Robinson Z."/>
            <person name="Spiers A.J."/>
            <person name="Harris S."/>
            <person name="Challis G.L."/>
            <person name="Yaxley A.M."/>
            <person name="Harris D."/>
            <person name="Seeger K."/>
            <person name="Murphy L."/>
            <person name="Rutter S."/>
            <person name="Squares R."/>
            <person name="Quail M.A."/>
            <person name="Saunders E."/>
            <person name="Mavromatis K."/>
            <person name="Brettin T.S."/>
            <person name="Bentley S.D."/>
            <person name="Hothersall J."/>
            <person name="Stephens E."/>
            <person name="Thomas C.M."/>
            <person name="Parkhill J."/>
            <person name="Levy S.B."/>
            <person name="Rainey P.B."/>
            <person name="Thomson N.R."/>
        </authorList>
    </citation>
    <scope>NUCLEOTIDE SEQUENCE [LARGE SCALE GENOMIC DNA]</scope>
    <source>
        <strain>Pf0-1</strain>
    </source>
</reference>
<keyword id="KW-0056">Arginine metabolism</keyword>
<keyword id="KW-0378">Hydrolase</keyword>
<comment type="function">
    <text evidence="1">Catalyzes the hydrolysis of N(2)-succinylarginine into N(2)-succinylornithine, ammonia and CO(2).</text>
</comment>
<comment type="catalytic activity">
    <reaction evidence="1">
        <text>N(2)-succinyl-L-arginine + 2 H2O + 2 H(+) = N(2)-succinyl-L-ornithine + 2 NH4(+) + CO2</text>
        <dbReference type="Rhea" id="RHEA:19533"/>
        <dbReference type="ChEBI" id="CHEBI:15377"/>
        <dbReference type="ChEBI" id="CHEBI:15378"/>
        <dbReference type="ChEBI" id="CHEBI:16526"/>
        <dbReference type="ChEBI" id="CHEBI:28938"/>
        <dbReference type="ChEBI" id="CHEBI:58241"/>
        <dbReference type="ChEBI" id="CHEBI:58514"/>
        <dbReference type="EC" id="3.5.3.23"/>
    </reaction>
</comment>
<comment type="pathway">
    <text evidence="1">Amino-acid degradation; L-arginine degradation via AST pathway; L-glutamate and succinate from L-arginine: step 2/5.</text>
</comment>
<comment type="subunit">
    <text evidence="1">Homodimer.</text>
</comment>
<comment type="similarity">
    <text evidence="1">Belongs to the succinylarginine dihydrolase family.</text>
</comment>
<feature type="chain" id="PRO_0000262366" description="N-succinylarginine dihydrolase">
    <location>
        <begin position="1"/>
        <end position="448"/>
    </location>
</feature>
<feature type="active site" evidence="1">
    <location>
        <position position="174"/>
    </location>
</feature>
<feature type="active site" evidence="1">
    <location>
        <position position="250"/>
    </location>
</feature>
<feature type="active site" description="Nucleophile" evidence="1">
    <location>
        <position position="371"/>
    </location>
</feature>
<feature type="binding site" evidence="1">
    <location>
        <begin position="19"/>
        <end position="28"/>
    </location>
    <ligand>
        <name>substrate</name>
    </ligand>
</feature>
<feature type="binding site" evidence="1">
    <location>
        <position position="110"/>
    </location>
    <ligand>
        <name>substrate</name>
    </ligand>
</feature>
<feature type="binding site" evidence="1">
    <location>
        <begin position="137"/>
        <end position="138"/>
    </location>
    <ligand>
        <name>substrate</name>
    </ligand>
</feature>
<feature type="binding site" evidence="1">
    <location>
        <position position="214"/>
    </location>
    <ligand>
        <name>substrate</name>
    </ligand>
</feature>
<feature type="binding site" evidence="1">
    <location>
        <position position="252"/>
    </location>
    <ligand>
        <name>substrate</name>
    </ligand>
</feature>
<feature type="binding site" evidence="1">
    <location>
        <position position="365"/>
    </location>
    <ligand>
        <name>substrate</name>
    </ligand>
</feature>
<accession>Q3K886</accession>
<protein>
    <recommendedName>
        <fullName evidence="1">N-succinylarginine dihydrolase</fullName>
        <ecNumber evidence="1">3.5.3.23</ecNumber>
    </recommendedName>
</protein>
<proteinExistence type="inferred from homology"/>
<dbReference type="EC" id="3.5.3.23" evidence="1"/>
<dbReference type="EMBL" id="CP000094">
    <property type="protein sequence ID" value="ABA76018.1"/>
    <property type="molecule type" value="Genomic_DNA"/>
</dbReference>
<dbReference type="RefSeq" id="WP_011335532.1">
    <property type="nucleotide sequence ID" value="NC_007492.2"/>
</dbReference>
<dbReference type="SMR" id="Q3K886"/>
<dbReference type="KEGG" id="pfo:Pfl01_4281"/>
<dbReference type="eggNOG" id="COG3724">
    <property type="taxonomic scope" value="Bacteria"/>
</dbReference>
<dbReference type="HOGENOM" id="CLU_053835_0_0_6"/>
<dbReference type="UniPathway" id="UPA00185">
    <property type="reaction ID" value="UER00280"/>
</dbReference>
<dbReference type="Proteomes" id="UP000002704">
    <property type="component" value="Chromosome"/>
</dbReference>
<dbReference type="GO" id="GO:0009015">
    <property type="term" value="F:N-succinylarginine dihydrolase activity"/>
    <property type="evidence" value="ECO:0007669"/>
    <property type="project" value="UniProtKB-UniRule"/>
</dbReference>
<dbReference type="GO" id="GO:0019544">
    <property type="term" value="P:arginine catabolic process to glutamate"/>
    <property type="evidence" value="ECO:0007669"/>
    <property type="project" value="UniProtKB-UniRule"/>
</dbReference>
<dbReference type="GO" id="GO:0019545">
    <property type="term" value="P:arginine catabolic process to succinate"/>
    <property type="evidence" value="ECO:0007669"/>
    <property type="project" value="UniProtKB-UniRule"/>
</dbReference>
<dbReference type="FunFam" id="3.75.10.20:FF:000001">
    <property type="entry name" value="N-succinylarginine dihydrolase"/>
    <property type="match status" value="1"/>
</dbReference>
<dbReference type="Gene3D" id="3.75.10.20">
    <property type="entry name" value="Succinylarginine dihydrolase"/>
    <property type="match status" value="1"/>
</dbReference>
<dbReference type="HAMAP" id="MF_01172">
    <property type="entry name" value="AstB"/>
    <property type="match status" value="1"/>
</dbReference>
<dbReference type="InterPro" id="IPR037031">
    <property type="entry name" value="AstB_sf"/>
</dbReference>
<dbReference type="InterPro" id="IPR007079">
    <property type="entry name" value="SuccinylArg_d-Hdrlase_AstB"/>
</dbReference>
<dbReference type="NCBIfam" id="TIGR03241">
    <property type="entry name" value="arg_catab_astB"/>
    <property type="match status" value="1"/>
</dbReference>
<dbReference type="NCBIfam" id="NF009789">
    <property type="entry name" value="PRK13281.1"/>
    <property type="match status" value="1"/>
</dbReference>
<dbReference type="PANTHER" id="PTHR30420">
    <property type="entry name" value="N-SUCCINYLARGININE DIHYDROLASE"/>
    <property type="match status" value="1"/>
</dbReference>
<dbReference type="PANTHER" id="PTHR30420:SF2">
    <property type="entry name" value="N-SUCCINYLARGININE DIHYDROLASE"/>
    <property type="match status" value="1"/>
</dbReference>
<dbReference type="Pfam" id="PF04996">
    <property type="entry name" value="AstB"/>
    <property type="match status" value="1"/>
</dbReference>
<dbReference type="SUPFAM" id="SSF55909">
    <property type="entry name" value="Pentein"/>
    <property type="match status" value="1"/>
</dbReference>
<name>ASTB_PSEPF</name>